<feature type="chain" id="PRO_0000167180" description="Small ribosomal subunit protein bS16">
    <location>
        <begin position="1"/>
        <end position="165"/>
    </location>
</feature>
<feature type="region of interest" description="Disordered" evidence="2">
    <location>
        <begin position="110"/>
        <end position="165"/>
    </location>
</feature>
<feature type="compositionally biased region" description="Basic and acidic residues" evidence="2">
    <location>
        <begin position="129"/>
        <end position="144"/>
    </location>
</feature>
<feature type="compositionally biased region" description="Acidic residues" evidence="2">
    <location>
        <begin position="151"/>
        <end position="165"/>
    </location>
</feature>
<name>RS16_CORGL</name>
<dbReference type="EMBL" id="BA000036">
    <property type="protein sequence ID" value="BAB99447.1"/>
    <property type="molecule type" value="Genomic_DNA"/>
</dbReference>
<dbReference type="EMBL" id="BX927154">
    <property type="protein sequence ID" value="CAF20392.1"/>
    <property type="molecule type" value="Genomic_DNA"/>
</dbReference>
<dbReference type="RefSeq" id="NP_601257.1">
    <property type="nucleotide sequence ID" value="NC_003450.3"/>
</dbReference>
<dbReference type="RefSeq" id="WP_011014848.1">
    <property type="nucleotide sequence ID" value="NC_006958.1"/>
</dbReference>
<dbReference type="SMR" id="Q8NNX3"/>
<dbReference type="STRING" id="196627.cg2253"/>
<dbReference type="GeneID" id="1020008"/>
<dbReference type="KEGG" id="cgb:cg2253"/>
<dbReference type="KEGG" id="cgl:Cgl2054"/>
<dbReference type="PATRIC" id="fig|196627.13.peg.1992"/>
<dbReference type="eggNOG" id="COG0228">
    <property type="taxonomic scope" value="Bacteria"/>
</dbReference>
<dbReference type="HOGENOM" id="CLU_100590_1_1_11"/>
<dbReference type="OrthoDB" id="9807878at2"/>
<dbReference type="BioCyc" id="CORYNE:G18NG-11646-MONOMER"/>
<dbReference type="Proteomes" id="UP000000582">
    <property type="component" value="Chromosome"/>
</dbReference>
<dbReference type="Proteomes" id="UP000001009">
    <property type="component" value="Chromosome"/>
</dbReference>
<dbReference type="GO" id="GO:0005737">
    <property type="term" value="C:cytoplasm"/>
    <property type="evidence" value="ECO:0007669"/>
    <property type="project" value="UniProtKB-ARBA"/>
</dbReference>
<dbReference type="GO" id="GO:0015935">
    <property type="term" value="C:small ribosomal subunit"/>
    <property type="evidence" value="ECO:0007669"/>
    <property type="project" value="TreeGrafter"/>
</dbReference>
<dbReference type="GO" id="GO:0003735">
    <property type="term" value="F:structural constituent of ribosome"/>
    <property type="evidence" value="ECO:0007669"/>
    <property type="project" value="InterPro"/>
</dbReference>
<dbReference type="GO" id="GO:0006412">
    <property type="term" value="P:translation"/>
    <property type="evidence" value="ECO:0007669"/>
    <property type="project" value="UniProtKB-UniRule"/>
</dbReference>
<dbReference type="Gene3D" id="3.30.1320.10">
    <property type="match status" value="1"/>
</dbReference>
<dbReference type="HAMAP" id="MF_00385">
    <property type="entry name" value="Ribosomal_bS16"/>
    <property type="match status" value="1"/>
</dbReference>
<dbReference type="InterPro" id="IPR000307">
    <property type="entry name" value="Ribosomal_bS16"/>
</dbReference>
<dbReference type="InterPro" id="IPR023803">
    <property type="entry name" value="Ribosomal_bS16_dom_sf"/>
</dbReference>
<dbReference type="NCBIfam" id="NF011093">
    <property type="entry name" value="PRK14520.1"/>
    <property type="match status" value="1"/>
</dbReference>
<dbReference type="NCBIfam" id="TIGR00002">
    <property type="entry name" value="S16"/>
    <property type="match status" value="1"/>
</dbReference>
<dbReference type="PANTHER" id="PTHR12919">
    <property type="entry name" value="30S RIBOSOMAL PROTEIN S16"/>
    <property type="match status" value="1"/>
</dbReference>
<dbReference type="PANTHER" id="PTHR12919:SF20">
    <property type="entry name" value="SMALL RIBOSOMAL SUBUNIT PROTEIN BS16M"/>
    <property type="match status" value="1"/>
</dbReference>
<dbReference type="Pfam" id="PF00886">
    <property type="entry name" value="Ribosomal_S16"/>
    <property type="match status" value="1"/>
</dbReference>
<dbReference type="SUPFAM" id="SSF54565">
    <property type="entry name" value="Ribosomal protein S16"/>
    <property type="match status" value="1"/>
</dbReference>
<keyword id="KW-1185">Reference proteome</keyword>
<keyword id="KW-0687">Ribonucleoprotein</keyword>
<keyword id="KW-0689">Ribosomal protein</keyword>
<reference key="1">
    <citation type="journal article" date="2003" name="Appl. Microbiol. Biotechnol.">
        <title>The Corynebacterium glutamicum genome: features and impacts on biotechnological processes.</title>
        <authorList>
            <person name="Ikeda M."/>
            <person name="Nakagawa S."/>
        </authorList>
    </citation>
    <scope>NUCLEOTIDE SEQUENCE [LARGE SCALE GENOMIC DNA]</scope>
    <source>
        <strain>ATCC 13032 / DSM 20300 / JCM 1318 / BCRC 11384 / CCUG 27702 / LMG 3730 / NBRC 12168 / NCIMB 10025 / NRRL B-2784 / 534</strain>
    </source>
</reference>
<reference key="2">
    <citation type="journal article" date="2003" name="J. Biotechnol.">
        <title>The complete Corynebacterium glutamicum ATCC 13032 genome sequence and its impact on the production of L-aspartate-derived amino acids and vitamins.</title>
        <authorList>
            <person name="Kalinowski J."/>
            <person name="Bathe B."/>
            <person name="Bartels D."/>
            <person name="Bischoff N."/>
            <person name="Bott M."/>
            <person name="Burkovski A."/>
            <person name="Dusch N."/>
            <person name="Eggeling L."/>
            <person name="Eikmanns B.J."/>
            <person name="Gaigalat L."/>
            <person name="Goesmann A."/>
            <person name="Hartmann M."/>
            <person name="Huthmacher K."/>
            <person name="Kraemer R."/>
            <person name="Linke B."/>
            <person name="McHardy A.C."/>
            <person name="Meyer F."/>
            <person name="Moeckel B."/>
            <person name="Pfefferle W."/>
            <person name="Puehler A."/>
            <person name="Rey D.A."/>
            <person name="Rueckert C."/>
            <person name="Rupp O."/>
            <person name="Sahm H."/>
            <person name="Wendisch V.F."/>
            <person name="Wiegraebe I."/>
            <person name="Tauch A."/>
        </authorList>
    </citation>
    <scope>NUCLEOTIDE SEQUENCE [LARGE SCALE GENOMIC DNA]</scope>
    <source>
        <strain>ATCC 13032 / DSM 20300 / JCM 1318 / BCRC 11384 / CCUG 27702 / LMG 3730 / NBRC 12168 / NCIMB 10025 / NRRL B-2784 / 534</strain>
    </source>
</reference>
<sequence length="165" mass="17837">MAVKIKLQRLGKIRTPHYRVVIADARTKRDGKVIENIGIYEPKAEPSVIKINSERAQHWLSVGAQPTEAVAALLKVTGDWQKFKGIEGAEGTLRVAEPKPSKLELFNQALSEANNGPTAEAITEKKKKAREDKEAKEAAEKAAAEKAAAAESEEAPAEEAAAEEA</sequence>
<comment type="similarity">
    <text evidence="1">Belongs to the bacterial ribosomal protein bS16 family.</text>
</comment>
<organism>
    <name type="scientific">Corynebacterium glutamicum (strain ATCC 13032 / DSM 20300 / JCM 1318 / BCRC 11384 / CCUG 27702 / LMG 3730 / NBRC 12168 / NCIMB 10025 / NRRL B-2784 / 534)</name>
    <dbReference type="NCBI Taxonomy" id="196627"/>
    <lineage>
        <taxon>Bacteria</taxon>
        <taxon>Bacillati</taxon>
        <taxon>Actinomycetota</taxon>
        <taxon>Actinomycetes</taxon>
        <taxon>Mycobacteriales</taxon>
        <taxon>Corynebacteriaceae</taxon>
        <taxon>Corynebacterium</taxon>
    </lineage>
</organism>
<gene>
    <name evidence="1" type="primary">rpsP</name>
    <name type="ordered locus">Cgl2054</name>
    <name type="ordered locus">cg2253</name>
</gene>
<evidence type="ECO:0000255" key="1">
    <source>
        <dbReference type="HAMAP-Rule" id="MF_00385"/>
    </source>
</evidence>
<evidence type="ECO:0000256" key="2">
    <source>
        <dbReference type="SAM" id="MobiDB-lite"/>
    </source>
</evidence>
<evidence type="ECO:0000305" key="3"/>
<accession>Q8NNX3</accession>
<protein>
    <recommendedName>
        <fullName evidence="1">Small ribosomal subunit protein bS16</fullName>
    </recommendedName>
    <alternativeName>
        <fullName evidence="3">30S ribosomal protein S16</fullName>
    </alternativeName>
</protein>
<proteinExistence type="inferred from homology"/>